<sequence>MEDLGENTTVLSTLRSLNNFISQRVEGGSGLDVSTAAPGSLQLQYEQSMQLEERAEQIRSKSYLIQMEREKMQMELSHKRARVELERAANTSARNYEREVDRNQELLARIRQLQEREAAAEEKMQEQLERHRLCKQSLDAASQQLREREDGLAAARETISSLKGRVSEMQLNAMDQKVQVKRLESEKQELKEQLELQQRKCQEASQKIQELQASQEERADHEQKIKDLEQKLCLQEQDAAVVKNMKSELLRLPRMERELKRLREENTHLREMKETNGLLTEELEGLQRKLGRQEKMQEALVDLELEKEKLLAKLQSWEKLDQTMGVNLRTPEDLSRFVVELQQRELTLKEKNNTITSSARGLEKAQQQLQDEVRQVSAQLLEERKKREIHEALARRLQKRIVLLTKERDGMRAILGSYDSELTQAEYSAQLTQRMWEAEDMVQKVHAHSSEMETQLSQALEELGVQKQRADTLEMELKMLRAQTSSAETSFPFCKEEVDALRLKVEELEGERSRLEQEKQALEMQMERLTLQGDYNQSRTKVLHMSLNPASMARKRQQEDHARLQGECERLRGLVHALERGGPIPADLEVASSLPSSKEVAELRKQVESAELKNQRLKEVFQTKIQEFRKVCYTLTGYQIDVTTENQYRLTSRYAEHQSDCLIFKATGPSGSKMQLLETEFSRSVPELIELHLLQQDSIPAFLSALTIELFSRQTSI</sequence>
<accession>Q80YF0</accession>
<name>MD1L1_CRIGR</name>
<dbReference type="EMBL" id="AY247792">
    <property type="protein sequence ID" value="AAO91656.1"/>
    <property type="molecule type" value="mRNA"/>
</dbReference>
<dbReference type="RefSeq" id="NP_001233712.1">
    <property type="nucleotide sequence ID" value="NM_001246783.1"/>
</dbReference>
<dbReference type="SMR" id="Q80YF0"/>
<dbReference type="PaxDb" id="10029-NP_001233712.1"/>
<dbReference type="Ensembl" id="ENSCGRT00001015679.1">
    <property type="protein sequence ID" value="ENSCGRP00001011447.1"/>
    <property type="gene ID" value="ENSCGRG00001013089.1"/>
</dbReference>
<dbReference type="GeneID" id="100689352"/>
<dbReference type="KEGG" id="cge:100689352"/>
<dbReference type="CTD" id="8379"/>
<dbReference type="eggNOG" id="KOG4593">
    <property type="taxonomic scope" value="Eukaryota"/>
</dbReference>
<dbReference type="GeneTree" id="ENSGT00390000001316"/>
<dbReference type="OMA" id="YKLDFMP"/>
<dbReference type="OrthoDB" id="331602at2759"/>
<dbReference type="Proteomes" id="UP000694386">
    <property type="component" value="Unplaced"/>
</dbReference>
<dbReference type="Proteomes" id="UP001108280">
    <property type="component" value="Chromosome 4"/>
</dbReference>
<dbReference type="GO" id="GO:0005813">
    <property type="term" value="C:centrosome"/>
    <property type="evidence" value="ECO:0007669"/>
    <property type="project" value="UniProtKB-SubCell"/>
</dbReference>
<dbReference type="GO" id="GO:0000776">
    <property type="term" value="C:kinetochore"/>
    <property type="evidence" value="ECO:0000250"/>
    <property type="project" value="UniProtKB"/>
</dbReference>
<dbReference type="GO" id="GO:1990706">
    <property type="term" value="C:MAD1 complex"/>
    <property type="evidence" value="ECO:0007669"/>
    <property type="project" value="Ensembl"/>
</dbReference>
<dbReference type="GO" id="GO:0072686">
    <property type="term" value="C:mitotic spindle"/>
    <property type="evidence" value="ECO:0000250"/>
    <property type="project" value="UniProtKB"/>
</dbReference>
<dbReference type="GO" id="GO:1990728">
    <property type="term" value="C:mitotic spindle assembly checkpoint MAD1-MAD2 complex"/>
    <property type="evidence" value="ECO:0007669"/>
    <property type="project" value="Ensembl"/>
</dbReference>
<dbReference type="GO" id="GO:0097431">
    <property type="term" value="C:mitotic spindle pole"/>
    <property type="evidence" value="ECO:0007669"/>
    <property type="project" value="Ensembl"/>
</dbReference>
<dbReference type="GO" id="GO:0044615">
    <property type="term" value="C:nuclear pore nuclear basket"/>
    <property type="evidence" value="ECO:0000250"/>
    <property type="project" value="UniProtKB"/>
</dbReference>
<dbReference type="GO" id="GO:0005634">
    <property type="term" value="C:nucleus"/>
    <property type="evidence" value="ECO:0000250"/>
    <property type="project" value="UniProtKB"/>
</dbReference>
<dbReference type="GO" id="GO:0042802">
    <property type="term" value="F:identical protein binding"/>
    <property type="evidence" value="ECO:0007669"/>
    <property type="project" value="Ensembl"/>
</dbReference>
<dbReference type="GO" id="GO:0043515">
    <property type="term" value="F:kinetochore binding"/>
    <property type="evidence" value="ECO:0000250"/>
    <property type="project" value="UniProtKB"/>
</dbReference>
<dbReference type="GO" id="GO:0051315">
    <property type="term" value="P:attachment of mitotic spindle microtubules to kinetochore"/>
    <property type="evidence" value="ECO:0007669"/>
    <property type="project" value="TreeGrafter"/>
</dbReference>
<dbReference type="GO" id="GO:0051301">
    <property type="term" value="P:cell division"/>
    <property type="evidence" value="ECO:0007669"/>
    <property type="project" value="UniProtKB-KW"/>
</dbReference>
<dbReference type="GO" id="GO:0007094">
    <property type="term" value="P:mitotic spindle assembly checkpoint signaling"/>
    <property type="evidence" value="ECO:0007669"/>
    <property type="project" value="Ensembl"/>
</dbReference>
<dbReference type="GO" id="GO:0042130">
    <property type="term" value="P:negative regulation of T cell proliferation"/>
    <property type="evidence" value="ECO:0007669"/>
    <property type="project" value="Ensembl"/>
</dbReference>
<dbReference type="GO" id="GO:0090267">
    <property type="term" value="P:positive regulation of mitotic cell cycle spindle assembly checkpoint"/>
    <property type="evidence" value="ECO:0007669"/>
    <property type="project" value="Ensembl"/>
</dbReference>
<dbReference type="GO" id="GO:0090235">
    <property type="term" value="P:regulation of metaphase plate congression"/>
    <property type="evidence" value="ECO:0000250"/>
    <property type="project" value="UniProtKB"/>
</dbReference>
<dbReference type="GO" id="GO:0048538">
    <property type="term" value="P:thymus development"/>
    <property type="evidence" value="ECO:0007669"/>
    <property type="project" value="Ensembl"/>
</dbReference>
<dbReference type="FunFam" id="3.30.457.60:FF:000002">
    <property type="entry name" value="Mitotic spindle assembly checkpoint protein MAD1"/>
    <property type="match status" value="1"/>
</dbReference>
<dbReference type="FunFam" id="1.20.5.170:FF:000051">
    <property type="entry name" value="mitotic spindle assembly checkpoint protein MAD1"/>
    <property type="match status" value="1"/>
</dbReference>
<dbReference type="Gene3D" id="1.20.5.170">
    <property type="match status" value="1"/>
</dbReference>
<dbReference type="Gene3D" id="3.30.457.60">
    <property type="match status" value="1"/>
</dbReference>
<dbReference type="Gene3D" id="6.10.250.90">
    <property type="match status" value="1"/>
</dbReference>
<dbReference type="InterPro" id="IPR008672">
    <property type="entry name" value="Mad1"/>
</dbReference>
<dbReference type="PANTHER" id="PTHR23168:SF0">
    <property type="entry name" value="MITOTIC SPINDLE ASSEMBLY CHECKPOINT PROTEIN MAD1"/>
    <property type="match status" value="1"/>
</dbReference>
<dbReference type="PANTHER" id="PTHR23168">
    <property type="entry name" value="MITOTIC SPINDLE ASSEMBLY CHECKPOINT PROTEIN MAD1 MITOTIC ARREST DEFICIENT-LIKE PROTEIN 1"/>
    <property type="match status" value="1"/>
</dbReference>
<dbReference type="Pfam" id="PF05557">
    <property type="entry name" value="MAD"/>
    <property type="match status" value="1"/>
</dbReference>
<dbReference type="SUPFAM" id="SSF75704">
    <property type="entry name" value="Mitotic arrest deficient-like 1, Mad1"/>
    <property type="match status" value="1"/>
</dbReference>
<protein>
    <recommendedName>
        <fullName>Mitotic spindle assembly checkpoint protein MAD1</fullName>
    </recommendedName>
    <alternativeName>
        <fullName>Mitotic arrest deficient 1-like protein 1</fullName>
        <shortName>MAD1-like protein 1</shortName>
    </alternativeName>
</protein>
<evidence type="ECO:0000250" key="1"/>
<evidence type="ECO:0000250" key="2">
    <source>
        <dbReference type="UniProtKB" id="Q9Y6D9"/>
    </source>
</evidence>
<evidence type="ECO:0000255" key="3"/>
<evidence type="ECO:0000305" key="4"/>
<gene>
    <name type="primary">MAD1L1</name>
    <name type="synonym">MAD1</name>
</gene>
<proteinExistence type="evidence at transcript level"/>
<keyword id="KW-0007">Acetylation</keyword>
<keyword id="KW-0131">Cell cycle</keyword>
<keyword id="KW-0132">Cell division</keyword>
<keyword id="KW-0137">Centromere</keyword>
<keyword id="KW-0158">Chromosome</keyword>
<keyword id="KW-0175">Coiled coil</keyword>
<keyword id="KW-0963">Cytoplasm</keyword>
<keyword id="KW-0206">Cytoskeleton</keyword>
<keyword id="KW-1017">Isopeptide bond</keyword>
<keyword id="KW-0995">Kinetochore</keyword>
<keyword id="KW-0498">Mitosis</keyword>
<keyword id="KW-0539">Nucleus</keyword>
<keyword id="KW-0597">Phosphoprotein</keyword>
<keyword id="KW-0832">Ubl conjugation</keyword>
<organism>
    <name type="scientific">Cricetulus griseus</name>
    <name type="common">Chinese hamster</name>
    <name type="synonym">Cricetulus barabensis griseus</name>
    <dbReference type="NCBI Taxonomy" id="10029"/>
    <lineage>
        <taxon>Eukaryota</taxon>
        <taxon>Metazoa</taxon>
        <taxon>Chordata</taxon>
        <taxon>Craniata</taxon>
        <taxon>Vertebrata</taxon>
        <taxon>Euteleostomi</taxon>
        <taxon>Mammalia</taxon>
        <taxon>Eutheria</taxon>
        <taxon>Euarchontoglires</taxon>
        <taxon>Glires</taxon>
        <taxon>Rodentia</taxon>
        <taxon>Myomorpha</taxon>
        <taxon>Muroidea</taxon>
        <taxon>Cricetidae</taxon>
        <taxon>Cricetinae</taxon>
        <taxon>Cricetulus</taxon>
    </lineage>
</organism>
<reference key="1">
    <citation type="submission" date="2003-03" db="EMBL/GenBank/DDBJ databases">
        <title>Cloning of Hamster mitotic checkpoint protein (MAD1).</title>
        <authorList>
            <person name="Jeang K.-T."/>
            <person name="Yedavalli V.S."/>
        </authorList>
    </citation>
    <scope>NUCLEOTIDE SEQUENCE [MRNA]</scope>
</reference>
<comment type="function">
    <text evidence="2">Component of the spindle-assembly checkpoint that prevents the onset of anaphase until all chromosomes are properly aligned at the metaphase plate (By similarity). Forms a heterotetrameric complex with the closed conformation form of MAD2L1 (C-MAD2) at unattached kinetochores during prometaphase, recruits an open conformation of MAD2L1 (O-MAD2) and promotes the conversion of O-MAD2 to C-MAD2, which ensures mitotic checkpoint signaling (By similarity).</text>
</comment>
<comment type="subunit">
    <text evidence="2">Homodimer (By similarity). Dimerizes via its N- and C- terminal regions (By similarity). Heterodimerizes with MAD2L1 in order to form a tetrameric MAD1L1-MAD2L1 core complex (By similarity). Interacts with the closed conformation form of MAD2L1 (C-MAD2) and open conformation form of MAD2L1 (O-MAD2) (By similarity). It is unclear whether MAD1L1 dimerization promotes the conversion of closed to open conformation of MAD2L1 (By similarity). Formation of a heterotetrameric core complex containing two molecules each of MAD1L1 and of MAD2L1 promotes binding of another molecule of MAD2L1 to each MAD2L1, resulting in a heterohexamer (By similarity). Perturbation of the original MAD1L1-MAD2L1 structure by the spindle checkpoint may decrease MAD2L1 affinity for MAD1L1 (By similarity). CDC20 can compete with MAD1L1 for MAD2L1 binding, until the attachment and/or tension dampen the checkpoint signal, preventing further release of MAD2L1 on to CDC20 (By similarity). Also able to interact with the BUB1/BUB3 complex (By similarity). Interacts with NEK2 (By similarity). Interacts with TTK (By similarity). Interacts with TPR; the interactions occurs in a microtubule-independent manner (By similarity). Interacts with IK (By similarity). Interacts with the viral Tax protein (By similarity). Interacts with PRAP1 (By similarity).</text>
</comment>
<comment type="subcellular location">
    <subcellularLocation>
        <location evidence="2">Nucleus</location>
    </subcellularLocation>
    <subcellularLocation>
        <location evidence="2">Chromosome</location>
        <location evidence="2">Centromere</location>
        <location evidence="2">Kinetochore</location>
    </subcellularLocation>
    <subcellularLocation>
        <location evidence="2">Nucleus envelope</location>
    </subcellularLocation>
    <subcellularLocation>
        <location evidence="1">Cytoplasm</location>
        <location evidence="1">Cytoskeleton</location>
        <location evidence="1">Microtubule organizing center</location>
        <location evidence="1">Centrosome</location>
    </subcellularLocation>
    <subcellularLocation>
        <location evidence="1">Cytoplasm</location>
        <location evidence="1">Cytoskeleton</location>
        <location evidence="1">Spindle</location>
    </subcellularLocation>
    <subcellularLocation>
        <location evidence="2">Cytoplasm</location>
        <location evidence="2">Cytoskeleton</location>
        <location evidence="2">Spindle pole</location>
    </subcellularLocation>
    <text evidence="2">Detected at the nucleus envelope during interphase. From the beginning to the end of mitosis, it is seen to move from a diffusely nuclear distribution to the centrosome, to the spindle midzone and finally to the midbody. Detected at kinetochores during prometaphase. Colocalizes with NEK2 at the kinetochore. Colocalizes with IK at spindle poles during metaphase and anaphase.</text>
</comment>
<comment type="PTM">
    <text evidence="2">Phosphorylated; by BUB1. Become hyperphosphorylated in late S through M phases or after mitotic spindle damage.</text>
</comment>
<comment type="similarity">
    <text evidence="4">Belongs to the MAD1 family.</text>
</comment>
<feature type="chain" id="PRO_0000213799" description="Mitotic spindle assembly checkpoint protein MAD1">
    <location>
        <begin position="1"/>
        <end position="717"/>
    </location>
</feature>
<feature type="region of interest" description="Necessary for interaction with NEK2" evidence="1">
    <location>
        <begin position="380"/>
        <end position="532"/>
    </location>
</feature>
<feature type="region of interest" description="Necessary for interaction with MAD2L1" evidence="2">
    <location>
        <begin position="540"/>
        <end position="551"/>
    </location>
</feature>
<feature type="coiled-coil region" evidence="3">
    <location>
        <begin position="46"/>
        <end position="631"/>
    </location>
</feature>
<feature type="short sequence motif" description="Nuclear localization signal" evidence="2">
    <location>
        <begin position="79"/>
        <end position="82"/>
    </location>
</feature>
<feature type="modified residue" description="N-acetylmethionine" evidence="2">
    <location>
        <position position="1"/>
    </location>
</feature>
<feature type="modified residue" description="Phosphoserine" evidence="2">
    <location>
        <position position="16"/>
    </location>
</feature>
<feature type="modified residue" description="N6-acetyllysine; alternate" evidence="2">
    <location>
        <position position="61"/>
    </location>
</feature>
<feature type="modified residue" description="Phosphoserine" evidence="2">
    <location>
        <position position="214"/>
    </location>
</feature>
<feature type="modified residue" description="Phosphoserine" evidence="2">
    <location>
        <position position="428"/>
    </location>
</feature>
<feature type="cross-link" description="Glycyl lysine isopeptide (Lys-Gly) (interchain with G-Cter in SUMO2); alternate" evidence="2">
    <location>
        <position position="61"/>
    </location>
</feature>